<evidence type="ECO:0000250" key="1"/>
<evidence type="ECO:0000250" key="2">
    <source>
        <dbReference type="UniProtKB" id="P32337"/>
    </source>
</evidence>
<evidence type="ECO:0000250" key="3">
    <source>
        <dbReference type="UniProtKB" id="Q8BKC5"/>
    </source>
</evidence>
<evidence type="ECO:0000255" key="4">
    <source>
        <dbReference type="PROSITE-ProRule" id="PRU00115"/>
    </source>
</evidence>
<evidence type="ECO:0000269" key="5">
    <source>
    </source>
</evidence>
<evidence type="ECO:0000269" key="6">
    <source>
    </source>
</evidence>
<evidence type="ECO:0000269" key="7">
    <source>
    </source>
</evidence>
<evidence type="ECO:0000269" key="8">
    <source>
    </source>
</evidence>
<evidence type="ECO:0000269" key="9">
    <source ref="7"/>
</evidence>
<evidence type="ECO:0000303" key="10">
    <source>
    </source>
</evidence>
<evidence type="ECO:0000303" key="11">
    <source>
    </source>
</evidence>
<evidence type="ECO:0000303" key="12">
    <source>
    </source>
</evidence>
<evidence type="ECO:0000305" key="13"/>
<evidence type="ECO:0000305" key="14">
    <source>
    </source>
</evidence>
<evidence type="ECO:0007744" key="15">
    <source>
    </source>
</evidence>
<evidence type="ECO:0007744" key="16">
    <source>
    </source>
</evidence>
<evidence type="ECO:0007744" key="17">
    <source>
    </source>
</evidence>
<evidence type="ECO:0007744" key="18">
    <source>
    </source>
</evidence>
<evidence type="ECO:0007744" key="19">
    <source>
    </source>
</evidence>
<evidence type="ECO:0007744" key="20">
    <source>
    </source>
</evidence>
<evidence type="ECO:0007744" key="21">
    <source>
    </source>
</evidence>
<evidence type="ECO:0007744" key="22">
    <source>
    </source>
</evidence>
<evidence type="ECO:0007744" key="23">
    <source>
    </source>
</evidence>
<evidence type="ECO:0007744" key="24">
    <source>
    </source>
</evidence>
<evidence type="ECO:0007829" key="25">
    <source>
        <dbReference type="PDB" id="6XTE"/>
    </source>
</evidence>
<evidence type="ECO:0007829" key="26">
    <source>
        <dbReference type="PDB" id="6XU2"/>
    </source>
</evidence>
<evidence type="ECO:0007829" key="27">
    <source>
        <dbReference type="PDB" id="9IM6"/>
    </source>
</evidence>
<dbReference type="EMBL" id="U72761">
    <property type="protein sequence ID" value="AAC51317.1"/>
    <property type="molecule type" value="mRNA"/>
</dbReference>
<dbReference type="EMBL" id="Y08890">
    <property type="protein sequence ID" value="CAA70103.1"/>
    <property type="status" value="ALT_FRAME"/>
    <property type="molecule type" value="mRNA"/>
</dbReference>
<dbReference type="EMBL" id="AK302812">
    <property type="protein sequence ID" value="BAG64012.1"/>
    <property type="molecule type" value="mRNA"/>
</dbReference>
<dbReference type="EMBL" id="AL137120">
    <property type="status" value="NOT_ANNOTATED_CDS"/>
    <property type="molecule type" value="Genomic_DNA"/>
</dbReference>
<dbReference type="EMBL" id="AL356580">
    <property type="status" value="NOT_ANNOTATED_CDS"/>
    <property type="molecule type" value="Genomic_DNA"/>
</dbReference>
<dbReference type="EMBL" id="CH471085">
    <property type="protein sequence ID" value="EAX08980.1"/>
    <property type="molecule type" value="Genomic_DNA"/>
</dbReference>
<dbReference type="EMBL" id="BC001497">
    <property type="protein sequence ID" value="AAH01497.1"/>
    <property type="molecule type" value="mRNA"/>
</dbReference>
<dbReference type="EMBL" id="BC019309">
    <property type="protein sequence ID" value="AAH19309.1"/>
    <property type="molecule type" value="mRNA"/>
</dbReference>
<dbReference type="EMBL" id="BC045640">
    <property type="protein sequence ID" value="AAH45640.1"/>
    <property type="molecule type" value="mRNA"/>
</dbReference>
<dbReference type="CCDS" id="CCDS31999.2">
    <molecule id="O00410-1"/>
</dbReference>
<dbReference type="RefSeq" id="NP_002262.3">
    <molecule id="O00410-1"/>
    <property type="nucleotide sequence ID" value="NM_002271.4"/>
</dbReference>
<dbReference type="RefSeq" id="XP_005254109.1">
    <molecule id="O00410-3"/>
    <property type="nucleotide sequence ID" value="XM_005254052.4"/>
</dbReference>
<dbReference type="RefSeq" id="XP_005254110.1">
    <property type="nucleotide sequence ID" value="XM_005254053.3"/>
</dbReference>
<dbReference type="RefSeq" id="XP_011519389.1">
    <molecule id="O00410-3"/>
    <property type="nucleotide sequence ID" value="XM_011521087.3"/>
</dbReference>
<dbReference type="RefSeq" id="XP_011519390.1">
    <molecule id="O00410-3"/>
    <property type="nucleotide sequence ID" value="XM_011521088.3"/>
</dbReference>
<dbReference type="RefSeq" id="XP_011519391.1">
    <molecule id="O00410-3"/>
    <property type="nucleotide sequence ID" value="XM_011521089.3"/>
</dbReference>
<dbReference type="RefSeq" id="XP_011519392.1">
    <property type="nucleotide sequence ID" value="XM_011521090.2"/>
</dbReference>
<dbReference type="RefSeq" id="XP_016876051.1">
    <molecule id="O00410-3"/>
    <property type="nucleotide sequence ID" value="XM_017020562.2"/>
</dbReference>
<dbReference type="RefSeq" id="XP_024305114.1">
    <molecule id="O00410-3"/>
    <property type="nucleotide sequence ID" value="XM_024449346.2"/>
</dbReference>
<dbReference type="RefSeq" id="XP_047286252.1">
    <molecule id="O00410-3"/>
    <property type="nucleotide sequence ID" value="XM_047430296.1"/>
</dbReference>
<dbReference type="RefSeq" id="XP_047286253.1">
    <molecule id="O00410-3"/>
    <property type="nucleotide sequence ID" value="XM_047430297.1"/>
</dbReference>
<dbReference type="RefSeq" id="XP_047286254.1">
    <molecule id="O00410-3"/>
    <property type="nucleotide sequence ID" value="XM_047430298.1"/>
</dbReference>
<dbReference type="RefSeq" id="XP_047286255.1">
    <molecule id="O00410-1"/>
    <property type="nucleotide sequence ID" value="XM_047430299.1"/>
</dbReference>
<dbReference type="RefSeq" id="XP_047286256.1">
    <molecule id="O00410-1"/>
    <property type="nucleotide sequence ID" value="XM_047430300.1"/>
</dbReference>
<dbReference type="RefSeq" id="XP_054230481.1">
    <molecule id="O00410-3"/>
    <property type="nucleotide sequence ID" value="XM_054374506.1"/>
</dbReference>
<dbReference type="RefSeq" id="XP_054230482.1">
    <molecule id="O00410-3"/>
    <property type="nucleotide sequence ID" value="XM_054374507.1"/>
</dbReference>
<dbReference type="RefSeq" id="XP_054230483.1">
    <molecule id="O00410-3"/>
    <property type="nucleotide sequence ID" value="XM_054374508.1"/>
</dbReference>
<dbReference type="RefSeq" id="XP_054230484.1">
    <molecule id="O00410-3"/>
    <property type="nucleotide sequence ID" value="XM_054374509.1"/>
</dbReference>
<dbReference type="RefSeq" id="XP_054230485.1">
    <molecule id="O00410-3"/>
    <property type="nucleotide sequence ID" value="XM_054374510.1"/>
</dbReference>
<dbReference type="RefSeq" id="XP_054230486.1">
    <molecule id="O00410-3"/>
    <property type="nucleotide sequence ID" value="XM_054374511.1"/>
</dbReference>
<dbReference type="RefSeq" id="XP_054230487.1">
    <molecule id="O00410-3"/>
    <property type="nucleotide sequence ID" value="XM_054374512.1"/>
</dbReference>
<dbReference type="RefSeq" id="XP_054230488.1">
    <molecule id="O00410-3"/>
    <property type="nucleotide sequence ID" value="XM_054374513.1"/>
</dbReference>
<dbReference type="RefSeq" id="XP_054230489.1">
    <molecule id="O00410-3"/>
    <property type="nucleotide sequence ID" value="XM_054374514.1"/>
</dbReference>
<dbReference type="RefSeq" id="XP_054230490.1">
    <molecule id="O00410-1"/>
    <property type="nucleotide sequence ID" value="XM_054374515.1"/>
</dbReference>
<dbReference type="PDB" id="6XTE">
    <property type="method" value="X-ray"/>
    <property type="resolution" value="2.27 A"/>
    <property type="chains" value="A=4-1097"/>
</dbReference>
<dbReference type="PDB" id="6XU2">
    <property type="method" value="X-ray"/>
    <property type="resolution" value="2.83 A"/>
    <property type="chains" value="A=1-1097"/>
</dbReference>
<dbReference type="PDB" id="9IM6">
    <property type="method" value="EM"/>
    <property type="resolution" value="3.21 A"/>
    <property type="chains" value="A=1-1097"/>
</dbReference>
<dbReference type="PDBsum" id="6XTE"/>
<dbReference type="PDBsum" id="6XU2"/>
<dbReference type="PDBsum" id="9IM6"/>
<dbReference type="EMDB" id="EMD-60685"/>
<dbReference type="SMR" id="O00410"/>
<dbReference type="BioGRID" id="110041">
    <property type="interactions" value="432"/>
</dbReference>
<dbReference type="CORUM" id="O00410"/>
<dbReference type="DIP" id="DIP-41042N"/>
<dbReference type="FunCoup" id="O00410">
    <property type="interactions" value="4669"/>
</dbReference>
<dbReference type="IntAct" id="O00410">
    <property type="interactions" value="173"/>
</dbReference>
<dbReference type="MINT" id="O00410"/>
<dbReference type="STRING" id="9606.ENSP00000261574"/>
<dbReference type="ChEMBL" id="CHEMBL4295647"/>
<dbReference type="TCDB" id="1.I.1.1.3">
    <property type="family name" value="the nuclear pore complex (npc) family"/>
</dbReference>
<dbReference type="GlyGen" id="O00410">
    <property type="glycosylation" value="2 sites, 1 N-linked glycan (1 site), 1 O-linked glycan (1 site)"/>
</dbReference>
<dbReference type="iPTMnet" id="O00410"/>
<dbReference type="MetOSite" id="O00410"/>
<dbReference type="PhosphoSitePlus" id="O00410"/>
<dbReference type="SwissPalm" id="O00410"/>
<dbReference type="BioMuta" id="IPO5"/>
<dbReference type="CPTAC" id="CPTAC-226"/>
<dbReference type="jPOST" id="O00410"/>
<dbReference type="MassIVE" id="O00410"/>
<dbReference type="PaxDb" id="9606-ENSP00000261574"/>
<dbReference type="PeptideAtlas" id="O00410"/>
<dbReference type="ProteomicsDB" id="47872">
    <molecule id="O00410-1"/>
</dbReference>
<dbReference type="ProteomicsDB" id="47873">
    <molecule id="O00410-2"/>
</dbReference>
<dbReference type="ProteomicsDB" id="47874">
    <molecule id="O00410-3"/>
</dbReference>
<dbReference type="Pumba" id="O00410"/>
<dbReference type="Antibodypedia" id="3967">
    <property type="antibodies" value="194 antibodies from 30 providers"/>
</dbReference>
<dbReference type="DNASU" id="3843"/>
<dbReference type="Ensembl" id="ENST00000261574.10">
    <molecule id="O00410-3"/>
    <property type="protein sequence ID" value="ENSP00000261574.5"/>
    <property type="gene ID" value="ENSG00000065150.21"/>
</dbReference>
<dbReference type="Ensembl" id="ENST00000357602.7">
    <molecule id="O00410-1"/>
    <property type="protein sequence ID" value="ENSP00000350219.3"/>
    <property type="gene ID" value="ENSG00000065150.21"/>
</dbReference>
<dbReference type="Ensembl" id="ENST00000490680.5">
    <molecule id="O00410-1"/>
    <property type="protein sequence ID" value="ENSP00000418393.1"/>
    <property type="gene ID" value="ENSG00000065150.21"/>
</dbReference>
<dbReference type="Ensembl" id="ENST00000651721.2">
    <molecule id="O00410-1"/>
    <property type="protein sequence ID" value="ENSP00000499125.1"/>
    <property type="gene ID" value="ENSG00000065150.21"/>
</dbReference>
<dbReference type="GeneID" id="3843"/>
<dbReference type="KEGG" id="hsa:3843"/>
<dbReference type="MANE-Select" id="ENST00000651721.2">
    <property type="protein sequence ID" value="ENSP00000499125.1"/>
    <property type="RefSeq nucleotide sequence ID" value="NM_002271.6"/>
    <property type="RefSeq protein sequence ID" value="NP_002262.4"/>
</dbReference>
<dbReference type="UCSC" id="uc001vne.4">
    <molecule id="O00410-1"/>
    <property type="organism name" value="human"/>
</dbReference>
<dbReference type="AGR" id="HGNC:6402"/>
<dbReference type="CTD" id="3843"/>
<dbReference type="DisGeNET" id="3843"/>
<dbReference type="GeneCards" id="IPO5"/>
<dbReference type="HGNC" id="HGNC:6402">
    <property type="gene designation" value="IPO5"/>
</dbReference>
<dbReference type="HPA" id="ENSG00000065150">
    <property type="expression patterns" value="Tissue enhanced (testis)"/>
</dbReference>
<dbReference type="MIM" id="602008">
    <property type="type" value="gene"/>
</dbReference>
<dbReference type="neXtProt" id="NX_O00410"/>
<dbReference type="OpenTargets" id="ENSG00000065150"/>
<dbReference type="PharmGKB" id="PA30193"/>
<dbReference type="VEuPathDB" id="HostDB:ENSG00000065150"/>
<dbReference type="eggNOG" id="KOG2171">
    <property type="taxonomic scope" value="Eukaryota"/>
</dbReference>
<dbReference type="GeneTree" id="ENSGT00940000155502"/>
<dbReference type="HOGENOM" id="CLU_003794_0_0_1"/>
<dbReference type="InParanoid" id="O00410"/>
<dbReference type="OrthoDB" id="543373at2759"/>
<dbReference type="PAN-GO" id="O00410">
    <property type="GO annotations" value="5 GO annotations based on evolutionary models"/>
</dbReference>
<dbReference type="PhylomeDB" id="O00410"/>
<dbReference type="TreeFam" id="TF300344"/>
<dbReference type="PathwayCommons" id="O00410"/>
<dbReference type="Reactome" id="R-HSA-192905">
    <property type="pathway name" value="vRNP Assembly"/>
</dbReference>
<dbReference type="SignaLink" id="O00410"/>
<dbReference type="SIGNOR" id="O00410"/>
<dbReference type="BioGRID-ORCS" id="3843">
    <property type="hits" value="129 hits in 1157 CRISPR screens"/>
</dbReference>
<dbReference type="CD-CODE" id="1422620B">
    <property type="entry name" value="Synthetic Condensate 000017"/>
</dbReference>
<dbReference type="CD-CODE" id="91857CE7">
    <property type="entry name" value="Nucleolus"/>
</dbReference>
<dbReference type="CD-CODE" id="FB4E32DD">
    <property type="entry name" value="Presynaptic clusters and postsynaptic densities"/>
</dbReference>
<dbReference type="ChiTaRS" id="IPO5">
    <property type="organism name" value="human"/>
</dbReference>
<dbReference type="GeneWiki" id="RANBP5"/>
<dbReference type="GenomeRNAi" id="3843"/>
<dbReference type="Pharos" id="O00410">
    <property type="development level" value="Tbio"/>
</dbReference>
<dbReference type="PRO" id="PR:O00410"/>
<dbReference type="Proteomes" id="UP000005640">
    <property type="component" value="Chromosome 13"/>
</dbReference>
<dbReference type="RNAct" id="O00410">
    <property type="molecule type" value="protein"/>
</dbReference>
<dbReference type="Bgee" id="ENSG00000065150">
    <property type="expression patterns" value="Expressed in sperm and 214 other cell types or tissues"/>
</dbReference>
<dbReference type="ExpressionAtlas" id="O00410">
    <property type="expression patterns" value="baseline and differential"/>
</dbReference>
<dbReference type="GO" id="GO:0005737">
    <property type="term" value="C:cytoplasm"/>
    <property type="evidence" value="ECO:0000250"/>
    <property type="project" value="UniProtKB"/>
</dbReference>
<dbReference type="GO" id="GO:0005829">
    <property type="term" value="C:cytosol"/>
    <property type="evidence" value="ECO:0000314"/>
    <property type="project" value="HPA"/>
</dbReference>
<dbReference type="GO" id="GO:0005794">
    <property type="term" value="C:Golgi apparatus"/>
    <property type="evidence" value="ECO:0000314"/>
    <property type="project" value="HPA"/>
</dbReference>
<dbReference type="GO" id="GO:0016020">
    <property type="term" value="C:membrane"/>
    <property type="evidence" value="ECO:0007005"/>
    <property type="project" value="UniProtKB"/>
</dbReference>
<dbReference type="GO" id="GO:0031965">
    <property type="term" value="C:nuclear membrane"/>
    <property type="evidence" value="ECO:0000314"/>
    <property type="project" value="HPA"/>
</dbReference>
<dbReference type="GO" id="GO:0005643">
    <property type="term" value="C:nuclear pore"/>
    <property type="evidence" value="ECO:0000304"/>
    <property type="project" value="ProtInc"/>
</dbReference>
<dbReference type="GO" id="GO:0005730">
    <property type="term" value="C:nucleolus"/>
    <property type="evidence" value="ECO:0007669"/>
    <property type="project" value="UniProtKB-SubCell"/>
</dbReference>
<dbReference type="GO" id="GO:0005654">
    <property type="term" value="C:nucleoplasm"/>
    <property type="evidence" value="ECO:0000314"/>
    <property type="project" value="HPA"/>
</dbReference>
<dbReference type="GO" id="GO:0005634">
    <property type="term" value="C:nucleus"/>
    <property type="evidence" value="ECO:0000250"/>
    <property type="project" value="UniProtKB"/>
</dbReference>
<dbReference type="GO" id="GO:0005095">
    <property type="term" value="F:GTPase inhibitor activity"/>
    <property type="evidence" value="ECO:0000304"/>
    <property type="project" value="ProtInc"/>
</dbReference>
<dbReference type="GO" id="GO:0061608">
    <property type="term" value="F:nuclear import signal receptor activity"/>
    <property type="evidence" value="ECO:0000314"/>
    <property type="project" value="UniProt"/>
</dbReference>
<dbReference type="GO" id="GO:0008139">
    <property type="term" value="F:nuclear localization sequence binding"/>
    <property type="evidence" value="ECO:0000318"/>
    <property type="project" value="GO_Central"/>
</dbReference>
<dbReference type="GO" id="GO:0003723">
    <property type="term" value="F:RNA binding"/>
    <property type="evidence" value="ECO:0007005"/>
    <property type="project" value="UniProtKB"/>
</dbReference>
<dbReference type="GO" id="GO:0031267">
    <property type="term" value="F:small GTPase binding"/>
    <property type="evidence" value="ECO:0000304"/>
    <property type="project" value="ProtInc"/>
</dbReference>
<dbReference type="GO" id="GO:0071230">
    <property type="term" value="P:cellular response to amino acid stimulus"/>
    <property type="evidence" value="ECO:0000250"/>
    <property type="project" value="UniProtKB"/>
</dbReference>
<dbReference type="GO" id="GO:0002753">
    <property type="term" value="P:cytoplasmic pattern recognition receptor signaling pathway"/>
    <property type="evidence" value="ECO:0000314"/>
    <property type="project" value="UniProt"/>
</dbReference>
<dbReference type="GO" id="GO:0045786">
    <property type="term" value="P:negative regulation of cell cycle"/>
    <property type="evidence" value="ECO:0000304"/>
    <property type="project" value="ARUK-UCL"/>
</dbReference>
<dbReference type="GO" id="GO:0006607">
    <property type="term" value="P:NLS-bearing protein import into nucleus"/>
    <property type="evidence" value="ECO:0000250"/>
    <property type="project" value="UniProtKB"/>
</dbReference>
<dbReference type="GO" id="GO:0042307">
    <property type="term" value="P:positive regulation of protein import into nucleus"/>
    <property type="evidence" value="ECO:0000250"/>
    <property type="project" value="UniProtKB"/>
</dbReference>
<dbReference type="GO" id="GO:0006606">
    <property type="term" value="P:protein import into nucleus"/>
    <property type="evidence" value="ECO:0000314"/>
    <property type="project" value="UniProt"/>
</dbReference>
<dbReference type="GO" id="GO:0006610">
    <property type="term" value="P:ribosomal protein import into nucleus"/>
    <property type="evidence" value="ECO:0000314"/>
    <property type="project" value="UniProtKB"/>
</dbReference>
<dbReference type="FunFam" id="1.25.10.10:FF:000074">
    <property type="entry name" value="importin-5 isoform X1"/>
    <property type="match status" value="1"/>
</dbReference>
<dbReference type="Gene3D" id="1.25.10.10">
    <property type="entry name" value="Leucine-rich Repeat Variant"/>
    <property type="match status" value="1"/>
</dbReference>
<dbReference type="InterPro" id="IPR011989">
    <property type="entry name" value="ARM-like"/>
</dbReference>
<dbReference type="InterPro" id="IPR016024">
    <property type="entry name" value="ARM-type_fold"/>
</dbReference>
<dbReference type="InterPro" id="IPR000357">
    <property type="entry name" value="HEAT"/>
</dbReference>
<dbReference type="InterPro" id="IPR001494">
    <property type="entry name" value="Importin-beta_N"/>
</dbReference>
<dbReference type="InterPro" id="IPR040122">
    <property type="entry name" value="Importin_beta"/>
</dbReference>
<dbReference type="InterPro" id="IPR041653">
    <property type="entry name" value="Importin_rep_4"/>
</dbReference>
<dbReference type="InterPro" id="IPR040928">
    <property type="entry name" value="Importin_rep_5"/>
</dbReference>
<dbReference type="InterPro" id="IPR041389">
    <property type="entry name" value="Importin_rep_6"/>
</dbReference>
<dbReference type="InterPro" id="IPR034085">
    <property type="entry name" value="TOG"/>
</dbReference>
<dbReference type="PANTHER" id="PTHR10527">
    <property type="entry name" value="IMPORTIN BETA"/>
    <property type="match status" value="1"/>
</dbReference>
<dbReference type="Pfam" id="PF02985">
    <property type="entry name" value="HEAT"/>
    <property type="match status" value="1"/>
</dbReference>
<dbReference type="Pfam" id="PF13513">
    <property type="entry name" value="HEAT_EZ"/>
    <property type="match status" value="1"/>
</dbReference>
<dbReference type="Pfam" id="PF18808">
    <property type="entry name" value="Importin_rep_4"/>
    <property type="match status" value="1"/>
</dbReference>
<dbReference type="Pfam" id="PF18816">
    <property type="entry name" value="Importin_rep_5"/>
    <property type="match status" value="1"/>
</dbReference>
<dbReference type="Pfam" id="PF18829">
    <property type="entry name" value="Importin_rep_6"/>
    <property type="match status" value="1"/>
</dbReference>
<dbReference type="SMART" id="SM01349">
    <property type="entry name" value="TOG"/>
    <property type="match status" value="1"/>
</dbReference>
<dbReference type="SUPFAM" id="SSF48371">
    <property type="entry name" value="ARM repeat"/>
    <property type="match status" value="1"/>
</dbReference>
<dbReference type="PROSITE" id="PS50166">
    <property type="entry name" value="IMPORTIN_B_NT"/>
    <property type="match status" value="1"/>
</dbReference>
<sequence length="1097" mass="123630">MAAAAAEQQQFYLLLGNLLSPDNVVRKQAEETYENIPGQSKITFLLQAIRNTTAAEEARQMAAVLLRRLLSSAFDEVYPALPSDVQTAIKSELLMIIQMETQSSMRKKVCDIAAELARNLIDEDGNNQWPEGLKFLFDSVSSQNVGLREAALHIFWNFPGIFGNQQQHYLDVIKRMLVQCMQDQEHPSIRTLSARATAAFILANEHNVALFKHFADLLPGFLQAVNDSCYQNDDSVLKSLVEIADTVPKYLRPHLEATLQLSLKLCGDTSLNNMQRQLALEVIVTLSETAAAMLRKHTNIVAQTIPQMLAMMVDLEEDEDWANADELEDDDFDSNAVAGESALDRMACGLGGKLVLPMIKEHIMQMLQNPDWKYRHAGLMALSAIGEGCHQQMEGILNEIVNFVLLFLQDPHPRVRYAACNAVGQMATDFAPGFQKKFHEKVIAALLQTMEDQGNQRVQAHAAAALINFTEDCPKSLLIPYLDNLVKHLHSIMVLKLQELIQKGTKLVLEQVVTSIASVADTAEEKFVPYYDLFMPSLKHIVENAVQKELRLLRGKTIECISLIGLAVGKEKFMQDASDVMQLLLKTQTDFNDMEDDDPQISYMISAWARMCKILGKEFQQYLPVVMGPLMKTASIKPEVALLDTQDMENMSDDDGWEFVNLGDQQSFGIKTAGLEEKSTACQMLVCYAKELKEGFVEYTEQVVKLMVPLLKFYFHDGVRVAAAESMPLLLECARVRGPEYLTQMWHFMCDALIKAIGTEPDSDVLSEIMHSFAKCIEVMGDGCLNNEHFEELGGILKAKLEEHFKNQELRQVKRQDEDYDEQVEESLQDEDDNDVYILTKVSDILHSIFSSYKEKVLPWFEQLLPLIVNLICPHRPWPDRQWGLCIFDDVIEHCSPASFKYAEYFLRPMLQYVCDNSPEVRQAAAYGLGVMAQYGGDNYRPFCTEALPLLVRVIQSADSKTKENVNATENCISAVGKIMKFKPDCVNVEEVLPHWLSWLPLHEDKEEAVQTFNYLCDLIESNHPIVLGPNNTNLPKIFSIIAEGEMHEAIKHEDPCAKRLANVVRQVQTSGGLWTECIAQLSPEQQAAIQELLNSA</sequence>
<keyword id="KW-0002">3D-structure</keyword>
<keyword id="KW-0007">Acetylation</keyword>
<keyword id="KW-0025">Alternative splicing</keyword>
<keyword id="KW-0963">Cytoplasm</keyword>
<keyword id="KW-0903">Direct protein sequencing</keyword>
<keyword id="KW-0945">Host-virus interaction</keyword>
<keyword id="KW-0539">Nucleus</keyword>
<keyword id="KW-0597">Phosphoprotein</keyword>
<keyword id="KW-0653">Protein transport</keyword>
<keyword id="KW-1267">Proteomics identification</keyword>
<keyword id="KW-1185">Reference proteome</keyword>
<keyword id="KW-0677">Repeat</keyword>
<keyword id="KW-0813">Transport</keyword>
<protein>
    <recommendedName>
        <fullName>Importin-5</fullName>
        <shortName>Imp5</shortName>
    </recommendedName>
    <alternativeName>
        <fullName>Importin subunit beta-3</fullName>
    </alternativeName>
    <alternativeName>
        <fullName>Karyopherin beta-3</fullName>
    </alternativeName>
    <alternativeName>
        <fullName>Ran-binding protein 5</fullName>
        <shortName>RanBP5</shortName>
    </alternativeName>
</protein>
<reference key="1">
    <citation type="journal article" date="1997" name="Proc. Natl. Acad. Sci. U.S.A.">
        <title>Cloning and characterization of human karyopherin beta3.</title>
        <authorList>
            <person name="Yaseen N.R."/>
            <person name="Blobel G."/>
        </authorList>
    </citation>
    <scope>NUCLEOTIDE SEQUENCE [MRNA] (ISOFORM 1)</scope>
    <scope>CHARACTERIZATION</scope>
    <source>
        <tissue>Bone marrow</tissue>
    </source>
</reference>
<reference key="2">
    <citation type="journal article" date="1997" name="Mol. Cell. Biol.">
        <title>Ran-binding protein 5 (RanBP5) is related to the nuclear transport factor importin-beta but interacts differently with RanBP1.</title>
        <authorList>
            <person name="Deane R."/>
            <person name="Schaeffer W."/>
            <person name="Zimmermann H.-P."/>
            <person name="Mueller L."/>
            <person name="Goerlich D."/>
            <person name="Prehn S."/>
            <person name="Ponstingl H."/>
            <person name="Bischoff F.R."/>
        </authorList>
    </citation>
    <scope>NUCLEOTIDE SEQUENCE [MRNA] (ISOFORM 3)</scope>
</reference>
<reference key="3">
    <citation type="journal article" date="2004" name="Nat. Genet.">
        <title>Complete sequencing and characterization of 21,243 full-length human cDNAs.</title>
        <authorList>
            <person name="Ota T."/>
            <person name="Suzuki Y."/>
            <person name="Nishikawa T."/>
            <person name="Otsuki T."/>
            <person name="Sugiyama T."/>
            <person name="Irie R."/>
            <person name="Wakamatsu A."/>
            <person name="Hayashi K."/>
            <person name="Sato H."/>
            <person name="Nagai K."/>
            <person name="Kimura K."/>
            <person name="Makita H."/>
            <person name="Sekine M."/>
            <person name="Obayashi M."/>
            <person name="Nishi T."/>
            <person name="Shibahara T."/>
            <person name="Tanaka T."/>
            <person name="Ishii S."/>
            <person name="Yamamoto J."/>
            <person name="Saito K."/>
            <person name="Kawai Y."/>
            <person name="Isono Y."/>
            <person name="Nakamura Y."/>
            <person name="Nagahari K."/>
            <person name="Murakami K."/>
            <person name="Yasuda T."/>
            <person name="Iwayanagi T."/>
            <person name="Wagatsuma M."/>
            <person name="Shiratori A."/>
            <person name="Sudo H."/>
            <person name="Hosoiri T."/>
            <person name="Kaku Y."/>
            <person name="Kodaira H."/>
            <person name="Kondo H."/>
            <person name="Sugawara M."/>
            <person name="Takahashi M."/>
            <person name="Kanda K."/>
            <person name="Yokoi T."/>
            <person name="Furuya T."/>
            <person name="Kikkawa E."/>
            <person name="Omura Y."/>
            <person name="Abe K."/>
            <person name="Kamihara K."/>
            <person name="Katsuta N."/>
            <person name="Sato K."/>
            <person name="Tanikawa M."/>
            <person name="Yamazaki M."/>
            <person name="Ninomiya K."/>
            <person name="Ishibashi T."/>
            <person name="Yamashita H."/>
            <person name="Murakawa K."/>
            <person name="Fujimori K."/>
            <person name="Tanai H."/>
            <person name="Kimata M."/>
            <person name="Watanabe M."/>
            <person name="Hiraoka S."/>
            <person name="Chiba Y."/>
            <person name="Ishida S."/>
            <person name="Ono Y."/>
            <person name="Takiguchi S."/>
            <person name="Watanabe S."/>
            <person name="Yosida M."/>
            <person name="Hotuta T."/>
            <person name="Kusano J."/>
            <person name="Kanehori K."/>
            <person name="Takahashi-Fujii A."/>
            <person name="Hara H."/>
            <person name="Tanase T.-O."/>
            <person name="Nomura Y."/>
            <person name="Togiya S."/>
            <person name="Komai F."/>
            <person name="Hara R."/>
            <person name="Takeuchi K."/>
            <person name="Arita M."/>
            <person name="Imose N."/>
            <person name="Musashino K."/>
            <person name="Yuuki H."/>
            <person name="Oshima A."/>
            <person name="Sasaki N."/>
            <person name="Aotsuka S."/>
            <person name="Yoshikawa Y."/>
            <person name="Matsunawa H."/>
            <person name="Ichihara T."/>
            <person name="Shiohata N."/>
            <person name="Sano S."/>
            <person name="Moriya S."/>
            <person name="Momiyama H."/>
            <person name="Satoh N."/>
            <person name="Takami S."/>
            <person name="Terashima Y."/>
            <person name="Suzuki O."/>
            <person name="Nakagawa S."/>
            <person name="Senoh A."/>
            <person name="Mizoguchi H."/>
            <person name="Goto Y."/>
            <person name="Shimizu F."/>
            <person name="Wakebe H."/>
            <person name="Hishigaki H."/>
            <person name="Watanabe T."/>
            <person name="Sugiyama A."/>
            <person name="Takemoto M."/>
            <person name="Kawakami B."/>
            <person name="Yamazaki M."/>
            <person name="Watanabe K."/>
            <person name="Kumagai A."/>
            <person name="Itakura S."/>
            <person name="Fukuzumi Y."/>
            <person name="Fujimori Y."/>
            <person name="Komiyama M."/>
            <person name="Tashiro H."/>
            <person name="Tanigami A."/>
            <person name="Fujiwara T."/>
            <person name="Ono T."/>
            <person name="Yamada K."/>
            <person name="Fujii Y."/>
            <person name="Ozaki K."/>
            <person name="Hirao M."/>
            <person name="Ohmori Y."/>
            <person name="Kawabata A."/>
            <person name="Hikiji T."/>
            <person name="Kobatake N."/>
            <person name="Inagaki H."/>
            <person name="Ikema Y."/>
            <person name="Okamoto S."/>
            <person name="Okitani R."/>
            <person name="Kawakami T."/>
            <person name="Noguchi S."/>
            <person name="Itoh T."/>
            <person name="Shigeta K."/>
            <person name="Senba T."/>
            <person name="Matsumura K."/>
            <person name="Nakajima Y."/>
            <person name="Mizuno T."/>
            <person name="Morinaga M."/>
            <person name="Sasaki M."/>
            <person name="Togashi T."/>
            <person name="Oyama M."/>
            <person name="Hata H."/>
            <person name="Watanabe M."/>
            <person name="Komatsu T."/>
            <person name="Mizushima-Sugano J."/>
            <person name="Satoh T."/>
            <person name="Shirai Y."/>
            <person name="Takahashi Y."/>
            <person name="Nakagawa K."/>
            <person name="Okumura K."/>
            <person name="Nagase T."/>
            <person name="Nomura N."/>
            <person name="Kikuchi H."/>
            <person name="Masuho Y."/>
            <person name="Yamashita R."/>
            <person name="Nakai K."/>
            <person name="Yada T."/>
            <person name="Nakamura Y."/>
            <person name="Ohara O."/>
            <person name="Isogai T."/>
            <person name="Sugano S."/>
        </authorList>
    </citation>
    <scope>NUCLEOTIDE SEQUENCE [LARGE SCALE MRNA] (ISOFORM 2)</scope>
    <source>
        <tissue>Testis</tissue>
    </source>
</reference>
<reference key="4">
    <citation type="journal article" date="2004" name="Nature">
        <title>The DNA sequence and analysis of human chromosome 13.</title>
        <authorList>
            <person name="Dunham A."/>
            <person name="Matthews L.H."/>
            <person name="Burton J."/>
            <person name="Ashurst J.L."/>
            <person name="Howe K.L."/>
            <person name="Ashcroft K.J."/>
            <person name="Beare D.M."/>
            <person name="Burford D.C."/>
            <person name="Hunt S.E."/>
            <person name="Griffiths-Jones S."/>
            <person name="Jones M.C."/>
            <person name="Keenan S.J."/>
            <person name="Oliver K."/>
            <person name="Scott C.E."/>
            <person name="Ainscough R."/>
            <person name="Almeida J.P."/>
            <person name="Ambrose K.D."/>
            <person name="Andrews D.T."/>
            <person name="Ashwell R.I.S."/>
            <person name="Babbage A.K."/>
            <person name="Bagguley C.L."/>
            <person name="Bailey J."/>
            <person name="Bannerjee R."/>
            <person name="Barlow K.F."/>
            <person name="Bates K."/>
            <person name="Beasley H."/>
            <person name="Bird C.P."/>
            <person name="Bray-Allen S."/>
            <person name="Brown A.J."/>
            <person name="Brown J.Y."/>
            <person name="Burrill W."/>
            <person name="Carder C."/>
            <person name="Carter N.P."/>
            <person name="Chapman J.C."/>
            <person name="Clamp M.E."/>
            <person name="Clark S.Y."/>
            <person name="Clarke G."/>
            <person name="Clee C.M."/>
            <person name="Clegg S.C."/>
            <person name="Cobley V."/>
            <person name="Collins J.E."/>
            <person name="Corby N."/>
            <person name="Coville G.J."/>
            <person name="Deloukas P."/>
            <person name="Dhami P."/>
            <person name="Dunham I."/>
            <person name="Dunn M."/>
            <person name="Earthrowl M.E."/>
            <person name="Ellington A.G."/>
            <person name="Faulkner L."/>
            <person name="Frankish A.G."/>
            <person name="Frankland J."/>
            <person name="French L."/>
            <person name="Garner P."/>
            <person name="Garnett J."/>
            <person name="Gilbert J.G.R."/>
            <person name="Gilson C.J."/>
            <person name="Ghori J."/>
            <person name="Grafham D.V."/>
            <person name="Gribble S.M."/>
            <person name="Griffiths C."/>
            <person name="Hall R.E."/>
            <person name="Hammond S."/>
            <person name="Harley J.L."/>
            <person name="Hart E.A."/>
            <person name="Heath P.D."/>
            <person name="Howden P.J."/>
            <person name="Huckle E.J."/>
            <person name="Hunt P.J."/>
            <person name="Hunt A.R."/>
            <person name="Johnson C."/>
            <person name="Johnson D."/>
            <person name="Kay M."/>
            <person name="Kimberley A.M."/>
            <person name="King A."/>
            <person name="Laird G.K."/>
            <person name="Langford C.J."/>
            <person name="Lawlor S."/>
            <person name="Leongamornlert D.A."/>
            <person name="Lloyd D.M."/>
            <person name="Lloyd C."/>
            <person name="Loveland J.E."/>
            <person name="Lovell J."/>
            <person name="Martin S."/>
            <person name="Mashreghi-Mohammadi M."/>
            <person name="McLaren S.J."/>
            <person name="McMurray A."/>
            <person name="Milne S."/>
            <person name="Moore M.J.F."/>
            <person name="Nickerson T."/>
            <person name="Palmer S.A."/>
            <person name="Pearce A.V."/>
            <person name="Peck A.I."/>
            <person name="Pelan S."/>
            <person name="Phillimore B."/>
            <person name="Porter K.M."/>
            <person name="Rice C.M."/>
            <person name="Searle S."/>
            <person name="Sehra H.K."/>
            <person name="Shownkeen R."/>
            <person name="Skuce C.D."/>
            <person name="Smith M."/>
            <person name="Steward C.A."/>
            <person name="Sycamore N."/>
            <person name="Tester J."/>
            <person name="Thomas D.W."/>
            <person name="Tracey A."/>
            <person name="Tromans A."/>
            <person name="Tubby B."/>
            <person name="Wall M."/>
            <person name="Wallis J.M."/>
            <person name="West A.P."/>
            <person name="Whitehead S.L."/>
            <person name="Willey D.L."/>
            <person name="Wilming L."/>
            <person name="Wray P.W."/>
            <person name="Wright M.W."/>
            <person name="Young L."/>
            <person name="Coulson A."/>
            <person name="Durbin R.M."/>
            <person name="Hubbard T."/>
            <person name="Sulston J.E."/>
            <person name="Beck S."/>
            <person name="Bentley D.R."/>
            <person name="Rogers J."/>
            <person name="Ross M.T."/>
        </authorList>
    </citation>
    <scope>NUCLEOTIDE SEQUENCE [LARGE SCALE GENOMIC DNA]</scope>
</reference>
<reference key="5">
    <citation type="submission" date="2005-07" db="EMBL/GenBank/DDBJ databases">
        <authorList>
            <person name="Mural R.J."/>
            <person name="Istrail S."/>
            <person name="Sutton G.G."/>
            <person name="Florea L."/>
            <person name="Halpern A.L."/>
            <person name="Mobarry C.M."/>
            <person name="Lippert R."/>
            <person name="Walenz B."/>
            <person name="Shatkay H."/>
            <person name="Dew I."/>
            <person name="Miller J.R."/>
            <person name="Flanigan M.J."/>
            <person name="Edwards N.J."/>
            <person name="Bolanos R."/>
            <person name="Fasulo D."/>
            <person name="Halldorsson B.V."/>
            <person name="Hannenhalli S."/>
            <person name="Turner R."/>
            <person name="Yooseph S."/>
            <person name="Lu F."/>
            <person name="Nusskern D.R."/>
            <person name="Shue B.C."/>
            <person name="Zheng X.H."/>
            <person name="Zhong F."/>
            <person name="Delcher A.L."/>
            <person name="Huson D.H."/>
            <person name="Kravitz S.A."/>
            <person name="Mouchard L."/>
            <person name="Reinert K."/>
            <person name="Remington K.A."/>
            <person name="Clark A.G."/>
            <person name="Waterman M.S."/>
            <person name="Eichler E.E."/>
            <person name="Adams M.D."/>
            <person name="Hunkapiller M.W."/>
            <person name="Myers E.W."/>
            <person name="Venter J.C."/>
        </authorList>
    </citation>
    <scope>NUCLEOTIDE SEQUENCE [LARGE SCALE GENOMIC DNA]</scope>
</reference>
<reference key="6">
    <citation type="journal article" date="2004" name="Genome Res.">
        <title>The status, quality, and expansion of the NIH full-length cDNA project: the Mammalian Gene Collection (MGC).</title>
        <authorList>
            <consortium name="The MGC Project Team"/>
        </authorList>
    </citation>
    <scope>NUCLEOTIDE SEQUENCE [LARGE SCALE MRNA] (ISOFORMS 1 AND 3)</scope>
    <source>
        <tissue>Lung</tissue>
        <tissue>Testis</tissue>
    </source>
</reference>
<reference key="7">
    <citation type="submission" date="2006-05" db="UniProtKB">
        <authorList>
            <person name="Bienvenut W.V."/>
            <person name="Kanor S."/>
            <person name="Tissot J.-D."/>
            <person name="Quadroni M."/>
        </authorList>
    </citation>
    <scope>PROTEIN SEQUENCE OF 2-13</scope>
    <scope>CLEAVAGE OF INITIATOR METHIONINE</scope>
    <scope>ACETYLATION AT ALA-2</scope>
    <scope>IDENTIFICATION BY MASS SPECTROMETRY</scope>
    <source>
        <tissue>T-cell</tissue>
    </source>
</reference>
<reference key="8">
    <citation type="journal article" date="1998" name="EMBO J.">
        <title>Importin beta, transportin, RanBP5 and RanBP7 mediate nuclear import of ribosomal proteins in mammalian cells.</title>
        <authorList>
            <person name="Jaekel S."/>
            <person name="Goerlich D."/>
        </authorList>
    </citation>
    <scope>FUNCTION</scope>
    <scope>NUCLEAR LOCALIZATION SIGNAL RECOGNITION</scope>
    <scope>INTERACTION WITH RPL23A; RPS7 AND RPL5</scope>
</reference>
<reference key="9">
    <citation type="journal article" date="2001" name="J. Cell Sci.">
        <title>Signal recognition particle protein 19 is imported into the nucleus by importin 8 (RanBP8) and transportin.</title>
        <authorList>
            <person name="Dean K.A."/>
            <person name="von Ahsen O."/>
            <person name="Goerlich D."/>
            <person name="Fried H.M."/>
        </authorList>
    </citation>
    <scope>FUNCTION</scope>
    <scope>INTERACTION WITH RPL23A AND SRP19</scope>
</reference>
<reference key="10">
    <citation type="journal article" date="2006" name="Cell">
        <title>Global, in vivo, and site-specific phosphorylation dynamics in signaling networks.</title>
        <authorList>
            <person name="Olsen J.V."/>
            <person name="Blagoev B."/>
            <person name="Gnad F."/>
            <person name="Macek B."/>
            <person name="Kumar C."/>
            <person name="Mortensen P."/>
            <person name="Mann M."/>
        </authorList>
    </citation>
    <scope>PHOSPHORYLATION [LARGE SCALE ANALYSIS] AT SER-827</scope>
    <scope>IDENTIFICATION BY MASS SPECTROMETRY [LARGE SCALE ANALYSIS]</scope>
    <source>
        <tissue>Cervix carcinoma</tissue>
    </source>
</reference>
<reference key="11">
    <citation type="journal article" date="2006" name="J. Biol. Chem.">
        <title>Multiple importins function as nuclear transport receptors for the Rev protein of human immunodeficiency virus type 1.</title>
        <authorList>
            <person name="Arnold M."/>
            <person name="Nath A."/>
            <person name="Hauber J."/>
            <person name="Kehlenbach R.H."/>
        </authorList>
    </citation>
    <scope>INTERACTION WITH HIV-1 REV (MICROBIAL INFECTION)</scope>
</reference>
<reference key="12">
    <citation type="journal article" date="2008" name="Mol. Cell">
        <title>Kinase-selective enrichment enables quantitative phosphoproteomics of the kinome across the cell cycle.</title>
        <authorList>
            <person name="Daub H."/>
            <person name="Olsen J.V."/>
            <person name="Bairlein M."/>
            <person name="Gnad F."/>
            <person name="Oppermann F.S."/>
            <person name="Korner R."/>
            <person name="Greff Z."/>
            <person name="Keri G."/>
            <person name="Stemmann O."/>
            <person name="Mann M."/>
        </authorList>
    </citation>
    <scope>PHOSPHORYLATION [LARGE SCALE ANALYSIS] AT SER-827</scope>
    <scope>IDENTIFICATION BY MASS SPECTROMETRY [LARGE SCALE ANALYSIS]</scope>
    <source>
        <tissue>Cervix carcinoma</tissue>
    </source>
</reference>
<reference key="13">
    <citation type="journal article" date="2008" name="Proc. Natl. Acad. Sci. U.S.A.">
        <title>A quantitative atlas of mitotic phosphorylation.</title>
        <authorList>
            <person name="Dephoure N."/>
            <person name="Zhou C."/>
            <person name="Villen J."/>
            <person name="Beausoleil S.A."/>
            <person name="Bakalarski C.E."/>
            <person name="Elledge S.J."/>
            <person name="Gygi S.P."/>
        </authorList>
    </citation>
    <scope>PHOSPHORYLATION [LARGE SCALE ANALYSIS] AT SER-827</scope>
    <scope>IDENTIFICATION BY MASS SPECTROMETRY [LARGE SCALE ANALYSIS]</scope>
    <source>
        <tissue>Cervix carcinoma</tissue>
    </source>
</reference>
<reference key="14">
    <citation type="journal article" date="2009" name="Anal. Chem.">
        <title>Lys-N and trypsin cover complementary parts of the phosphoproteome in a refined SCX-based approach.</title>
        <authorList>
            <person name="Gauci S."/>
            <person name="Helbig A.O."/>
            <person name="Slijper M."/>
            <person name="Krijgsveld J."/>
            <person name="Heck A.J."/>
            <person name="Mohammed S."/>
        </authorList>
    </citation>
    <scope>ACETYLATION [LARGE SCALE ANALYSIS] AT ALA-2</scope>
    <scope>CLEAVAGE OF INITIATOR METHIONINE [LARGE SCALE ANALYSIS]</scope>
    <scope>IDENTIFICATION BY MASS SPECTROMETRY [LARGE SCALE ANALYSIS]</scope>
</reference>
<reference key="15">
    <citation type="journal article" date="2009" name="Sci. Signal.">
        <title>Quantitative phosphoproteomic analysis of T cell receptor signaling reveals system-wide modulation of protein-protein interactions.</title>
        <authorList>
            <person name="Mayya V."/>
            <person name="Lundgren D.H."/>
            <person name="Hwang S.-I."/>
            <person name="Rezaul K."/>
            <person name="Wu L."/>
            <person name="Eng J.K."/>
            <person name="Rodionov V."/>
            <person name="Han D.K."/>
        </authorList>
    </citation>
    <scope>PHOSPHORYLATION [LARGE SCALE ANALYSIS] AT SER-827</scope>
    <scope>IDENTIFICATION BY MASS SPECTROMETRY [LARGE SCALE ANALYSIS]</scope>
    <source>
        <tissue>Leukemic T-cell</tissue>
    </source>
</reference>
<reference key="16">
    <citation type="journal article" date="2010" name="Sci. Signal.">
        <title>Quantitative phosphoproteomics reveals widespread full phosphorylation site occupancy during mitosis.</title>
        <authorList>
            <person name="Olsen J.V."/>
            <person name="Vermeulen M."/>
            <person name="Santamaria A."/>
            <person name="Kumar C."/>
            <person name="Miller M.L."/>
            <person name="Jensen L.J."/>
            <person name="Gnad F."/>
            <person name="Cox J."/>
            <person name="Jensen T.S."/>
            <person name="Nigg E.A."/>
            <person name="Brunak S."/>
            <person name="Mann M."/>
        </authorList>
    </citation>
    <scope>PHOSPHORYLATION [LARGE SCALE ANALYSIS] AT SER-827</scope>
    <scope>IDENTIFICATION BY MASS SPECTROMETRY [LARGE SCALE ANALYSIS]</scope>
    <source>
        <tissue>Cervix carcinoma</tissue>
    </source>
</reference>
<reference key="17">
    <citation type="journal article" date="2011" name="BMC Syst. Biol.">
        <title>Initial characterization of the human central proteome.</title>
        <authorList>
            <person name="Burkard T.R."/>
            <person name="Planyavsky M."/>
            <person name="Kaupe I."/>
            <person name="Breitwieser F.P."/>
            <person name="Buerckstuemmer T."/>
            <person name="Bennett K.L."/>
            <person name="Superti-Furga G."/>
            <person name="Colinge J."/>
        </authorList>
    </citation>
    <scope>IDENTIFICATION BY MASS SPECTROMETRY [LARGE SCALE ANALYSIS]</scope>
</reference>
<reference key="18">
    <citation type="journal article" date="2012" name="Mol. Cell. Proteomics">
        <title>Comparative large-scale characterisation of plant vs. mammal proteins reveals similar and idiosyncratic N-alpha acetylation features.</title>
        <authorList>
            <person name="Bienvenut W.V."/>
            <person name="Sumpton D."/>
            <person name="Martinez A."/>
            <person name="Lilla S."/>
            <person name="Espagne C."/>
            <person name="Meinnel T."/>
            <person name="Giglione C."/>
        </authorList>
    </citation>
    <scope>ACETYLATION [LARGE SCALE ANALYSIS] AT ALA-2</scope>
    <scope>CLEAVAGE OF INITIATOR METHIONINE [LARGE SCALE ANALYSIS]</scope>
    <scope>IDENTIFICATION BY MASS SPECTROMETRY [LARGE SCALE ANALYSIS]</scope>
</reference>
<reference key="19">
    <citation type="journal article" date="2012" name="Nucleic Acids Res.">
        <title>NMDAR signaling facilitates the IPO5-mediated nuclear import of CPEB3.</title>
        <authorList>
            <person name="Chao H.W."/>
            <person name="Lai Y.T."/>
            <person name="Lu Y.L."/>
            <person name="Lin C.L."/>
            <person name="Mai W."/>
            <person name="Huang Y.S."/>
        </authorList>
    </citation>
    <scope>INTERACTION WITH CPEB3</scope>
</reference>
<reference key="20">
    <citation type="journal article" date="2012" name="Proc. Natl. Acad. Sci. U.S.A.">
        <title>N-terminal acetylome analyses and functional insights of the N-terminal acetyltransferase NatB.</title>
        <authorList>
            <person name="Van Damme P."/>
            <person name="Lasa M."/>
            <person name="Polevoda B."/>
            <person name="Gazquez C."/>
            <person name="Elosegui-Artola A."/>
            <person name="Kim D.S."/>
            <person name="De Juan-Pardo E."/>
            <person name="Demeyer K."/>
            <person name="Hole K."/>
            <person name="Larrea E."/>
            <person name="Timmerman E."/>
            <person name="Prieto J."/>
            <person name="Arnesen T."/>
            <person name="Sherman F."/>
            <person name="Gevaert K."/>
            <person name="Aldabe R."/>
        </authorList>
    </citation>
    <scope>ACETYLATION [LARGE SCALE ANALYSIS] AT ALA-2</scope>
    <scope>CLEAVAGE OF INITIATOR METHIONINE [LARGE SCALE ANALYSIS]</scope>
    <scope>IDENTIFICATION BY MASS SPECTROMETRY [LARGE SCALE ANALYSIS]</scope>
</reference>
<reference key="21">
    <citation type="journal article" date="2013" name="J. Mol. Biol.">
        <title>Structural basis for cell-cycle-dependent nuclear import mediated by the karyopherin Kap121p.</title>
        <authorList>
            <person name="Kobayashi J."/>
            <person name="Matsuura Y."/>
        </authorList>
    </citation>
    <scope>REPEAT STRUCTURE</scope>
</reference>
<reference key="22">
    <citation type="journal article" date="2013" name="J. Proteome Res.">
        <title>Toward a comprehensive characterization of a human cancer cell phosphoproteome.</title>
        <authorList>
            <person name="Zhou H."/>
            <person name="Di Palma S."/>
            <person name="Preisinger C."/>
            <person name="Peng M."/>
            <person name="Polat A.N."/>
            <person name="Heck A.J."/>
            <person name="Mohammed S."/>
        </authorList>
    </citation>
    <scope>PHOSPHORYLATION [LARGE SCALE ANALYSIS] AT SER-827</scope>
    <scope>IDENTIFICATION BY MASS SPECTROMETRY [LARGE SCALE ANALYSIS]</scope>
    <source>
        <tissue>Erythroleukemia</tissue>
    </source>
</reference>
<reference key="23">
    <citation type="journal article" date="2015" name="Proteomics">
        <title>N-terminome analysis of the human mitochondrial proteome.</title>
        <authorList>
            <person name="Vaca Jacome A.S."/>
            <person name="Rabilloud T."/>
            <person name="Schaeffer-Reiss C."/>
            <person name="Rompais M."/>
            <person name="Ayoub D."/>
            <person name="Lane L."/>
            <person name="Bairoch A."/>
            <person name="Van Dorsselaer A."/>
            <person name="Carapito C."/>
        </authorList>
    </citation>
    <scope>ACETYLATION [LARGE SCALE ANALYSIS] AT ALA-2</scope>
    <scope>CLEAVAGE OF INITIATOR METHIONINE [LARGE SCALE ANALYSIS]</scope>
    <scope>IDENTIFICATION BY MASS SPECTROMETRY [LARGE SCALE ANALYSIS]</scope>
</reference>
<reference key="24">
    <citation type="journal article" date="2018" name="J. Biol. Chem.">
        <title>Soluble syntaxin 3 functions as a transcriptional regulator.</title>
        <authorList>
            <person name="Giovannone A.J."/>
            <person name="Winterstein C."/>
            <person name="Bhattaram P."/>
            <person name="Reales E."/>
            <person name="Low S.H."/>
            <person name="Baggs J.E."/>
            <person name="Xu M."/>
            <person name="Lalli M.A."/>
            <person name="Hogenesch J.B."/>
            <person name="Weimbs T."/>
        </authorList>
    </citation>
    <scope>INTERACTION WITH STX3 (ISOFORM 3)</scope>
</reference>
<feature type="initiator methionine" description="Removed" evidence="9 18 21 22 24">
    <location>
        <position position="1"/>
    </location>
</feature>
<feature type="chain" id="PRO_0000120771" description="Importin-5">
    <location>
        <begin position="2"/>
        <end position="1097"/>
    </location>
</feature>
<feature type="repeat" description="HEAT 1" evidence="2 14">
    <location>
        <begin position="5"/>
        <end position="38"/>
    </location>
</feature>
<feature type="domain" description="Importin N-terminal" evidence="4">
    <location>
        <begin position="28"/>
        <end position="99"/>
    </location>
</feature>
<feature type="repeat" description="HEAT 2" evidence="2 14">
    <location>
        <begin position="43"/>
        <end position="77"/>
    </location>
</feature>
<feature type="repeat" description="HEAT 3" evidence="2 14">
    <location>
        <begin position="95"/>
        <end position="122"/>
    </location>
</feature>
<feature type="repeat" description="HEAT 4" evidence="2 14">
    <location>
        <begin position="130"/>
        <end position="157"/>
    </location>
</feature>
<feature type="repeat" description="HEAT 5" evidence="2 14">
    <location>
        <begin position="167"/>
        <end position="201"/>
    </location>
</feature>
<feature type="repeat" description="HEAT 6" evidence="2 14">
    <location>
        <begin position="210"/>
        <end position="246"/>
    </location>
</feature>
<feature type="repeat" description="HEAT 7" evidence="2 14">
    <location>
        <begin position="254"/>
        <end position="289"/>
    </location>
</feature>
<feature type="repeat" description="HEAT 8" evidence="2 14">
    <location>
        <begin position="298"/>
        <end position="350"/>
    </location>
</feature>
<feature type="repeat" description="HEAT 9" evidence="2 14">
    <location>
        <begin position="352"/>
        <end position="386"/>
    </location>
</feature>
<feature type="repeat" description="HEAT 10" evidence="2 14">
    <location>
        <begin position="390"/>
        <end position="430"/>
    </location>
</feature>
<feature type="repeat" description="HEAT 11" evidence="2 14">
    <location>
        <begin position="432"/>
        <end position="472"/>
    </location>
</feature>
<feature type="repeat" description="HEAT 12" evidence="2 14">
    <location>
        <begin position="475"/>
        <end position="523"/>
    </location>
</feature>
<feature type="repeat" description="HEAT 13" evidence="2 14">
    <location>
        <begin position="525"/>
        <end position="568"/>
    </location>
</feature>
<feature type="repeat" description="HEAT 14" evidence="2 14">
    <location>
        <begin position="570"/>
        <end position="615"/>
    </location>
</feature>
<feature type="repeat" description="HEAT 15" evidence="2 14">
    <location>
        <begin position="617"/>
        <end position="692"/>
    </location>
</feature>
<feature type="repeat" description="HEAT 16" evidence="2 14">
    <location>
        <begin position="695"/>
        <end position="737"/>
    </location>
</feature>
<feature type="repeat" description="HEAT 17" evidence="2 14">
    <location>
        <begin position="741"/>
        <end position="780"/>
    </location>
</feature>
<feature type="repeat" description="HEAT 18" evidence="2 14">
    <location>
        <begin position="787"/>
        <end position="853"/>
    </location>
</feature>
<feature type="repeat" description="HEAT 19" evidence="2 14">
    <location>
        <begin position="856"/>
        <end position="895"/>
    </location>
</feature>
<feature type="repeat" description="HEAT 20" evidence="2 14">
    <location>
        <begin position="903"/>
        <end position="935"/>
    </location>
</feature>
<feature type="repeat" description="HEAT 21" evidence="2 14">
    <location>
        <begin position="943"/>
        <end position="983"/>
    </location>
</feature>
<feature type="repeat" description="HEAT 22" evidence="2 14">
    <location>
        <begin position="990"/>
        <end position="1021"/>
    </location>
</feature>
<feature type="repeat" description="HEAT 23" evidence="2 14">
    <location>
        <begin position="1032"/>
        <end position="1067"/>
    </location>
</feature>
<feature type="repeat" description="HEAT 24" evidence="2 14">
    <location>
        <begin position="1070"/>
        <end position="1093"/>
    </location>
</feature>
<feature type="region of interest" description="Ran-GTP binding" evidence="1">
    <location>
        <begin position="325"/>
        <end position="375"/>
    </location>
</feature>
<feature type="modified residue" description="N-acetylalanine" evidence="9 18 21 22 24">
    <location>
        <position position="2"/>
    </location>
</feature>
<feature type="modified residue" description="Phosphoserine" evidence="15 16 17 19 20 23">
    <location>
        <position position="827"/>
    </location>
</feature>
<feature type="splice variant" id="VSP_037587" description="In isoform 2." evidence="10">
    <location>
        <begin position="1"/>
        <end position="60"/>
    </location>
</feature>
<feature type="splice variant" id="VSP_037774" description="In isoform 3." evidence="11 12">
    <original>M</original>
    <variation>MPEDQVGKLEATENTISAM</variation>
    <location>
        <position position="1"/>
    </location>
</feature>
<feature type="sequence variant" id="VAR_012029" description="In dbSNP:rs1053814.">
    <original>L</original>
    <variation>I</variation>
    <location>
        <position position="286"/>
    </location>
</feature>
<feature type="sequence variant" id="VAR_012030" description="In dbSNP:rs632729.">
    <original>E</original>
    <variation>K</variation>
    <location>
        <position position="525"/>
    </location>
</feature>
<feature type="sequence variant" id="VAR_012031" description="In dbSNP:rs484770.">
    <original>E</original>
    <variation>K</variation>
    <location>
        <position position="549"/>
    </location>
</feature>
<feature type="sequence variant" id="VAR_012032" description="In dbSNP:rs1804740.">
    <original>Y</original>
    <variation>C</variation>
    <location>
        <position position="905"/>
    </location>
</feature>
<feature type="sequence variant" id="VAR_012033" description="In dbSNP:rs1804741.">
    <original>T</original>
    <variation>I</variation>
    <location>
        <position position="969"/>
    </location>
</feature>
<feature type="sequence conflict" description="In Ref. 6; AAH45640." evidence="13" ref="6">
    <original>L</original>
    <variation>R</variation>
    <location>
        <position position="538"/>
    </location>
</feature>
<feature type="sequence conflict" description="In Ref. 1; AAC51317." evidence="13" ref="1">
    <original>ES</original>
    <variation>GT</variation>
    <location>
        <begin position="826"/>
        <end position="827"/>
    </location>
</feature>
<feature type="helix" evidence="25">
    <location>
        <begin position="4"/>
        <end position="18"/>
    </location>
</feature>
<feature type="helix" evidence="25">
    <location>
        <begin position="23"/>
        <end position="34"/>
    </location>
</feature>
<feature type="helix" evidence="25">
    <location>
        <begin position="38"/>
        <end position="50"/>
    </location>
</feature>
<feature type="helix" evidence="25">
    <location>
        <begin position="56"/>
        <end position="72"/>
    </location>
</feature>
<feature type="helix" evidence="25">
    <location>
        <begin position="74"/>
        <end position="77"/>
    </location>
</feature>
<feature type="helix" evidence="25">
    <location>
        <begin position="83"/>
        <end position="99"/>
    </location>
</feature>
<feature type="helix" evidence="25">
    <location>
        <begin position="103"/>
        <end position="118"/>
    </location>
</feature>
<feature type="turn" evidence="26">
    <location>
        <begin position="122"/>
        <end position="124"/>
    </location>
</feature>
<feature type="helix" evidence="25">
    <location>
        <begin position="130"/>
        <end position="141"/>
    </location>
</feature>
<feature type="helix" evidence="25">
    <location>
        <begin position="145"/>
        <end position="157"/>
    </location>
</feature>
<feature type="turn" evidence="25">
    <location>
        <begin position="165"/>
        <end position="169"/>
    </location>
</feature>
<feature type="helix" evidence="25">
    <location>
        <begin position="170"/>
        <end position="182"/>
    </location>
</feature>
<feature type="helix" evidence="25">
    <location>
        <begin position="188"/>
        <end position="202"/>
    </location>
</feature>
<feature type="turn" evidence="25">
    <location>
        <begin position="203"/>
        <end position="206"/>
    </location>
</feature>
<feature type="helix" evidence="25">
    <location>
        <begin position="208"/>
        <end position="213"/>
    </location>
</feature>
<feature type="helix" evidence="25">
    <location>
        <begin position="215"/>
        <end position="217"/>
    </location>
</feature>
<feature type="helix" evidence="25">
    <location>
        <begin position="218"/>
        <end position="229"/>
    </location>
</feature>
<feature type="turn" evidence="25">
    <location>
        <begin position="230"/>
        <end position="232"/>
    </location>
</feature>
<feature type="helix" evidence="25">
    <location>
        <begin position="235"/>
        <end position="246"/>
    </location>
</feature>
<feature type="helix" evidence="25">
    <location>
        <begin position="248"/>
        <end position="254"/>
    </location>
</feature>
<feature type="helix" evidence="25">
    <location>
        <begin position="255"/>
        <end position="266"/>
    </location>
</feature>
<feature type="strand" evidence="27">
    <location>
        <begin position="269"/>
        <end position="271"/>
    </location>
</feature>
<feature type="helix" evidence="25">
    <location>
        <begin position="273"/>
        <end position="289"/>
    </location>
</feature>
<feature type="helix" evidence="25">
    <location>
        <begin position="291"/>
        <end position="294"/>
    </location>
</feature>
<feature type="helix" evidence="25">
    <location>
        <begin position="298"/>
        <end position="313"/>
    </location>
</feature>
<feature type="turn" evidence="26">
    <location>
        <begin position="321"/>
        <end position="323"/>
    </location>
</feature>
<feature type="strand" evidence="27">
    <location>
        <begin position="332"/>
        <end position="334"/>
    </location>
</feature>
<feature type="helix" evidence="25">
    <location>
        <begin position="335"/>
        <end position="350"/>
    </location>
</feature>
<feature type="helix" evidence="25">
    <location>
        <begin position="352"/>
        <end position="367"/>
    </location>
</feature>
<feature type="strand" evidence="26">
    <location>
        <begin position="368"/>
        <end position="370"/>
    </location>
</feature>
<feature type="helix" evidence="25">
    <location>
        <begin position="372"/>
        <end position="384"/>
    </location>
</feature>
<feature type="helix" evidence="25">
    <location>
        <begin position="386"/>
        <end position="389"/>
    </location>
</feature>
<feature type="turn" evidence="25">
    <location>
        <begin position="390"/>
        <end position="396"/>
    </location>
</feature>
<feature type="helix" evidence="25">
    <location>
        <begin position="397"/>
        <end position="406"/>
    </location>
</feature>
<feature type="helix" evidence="25">
    <location>
        <begin position="407"/>
        <end position="409"/>
    </location>
</feature>
<feature type="helix" evidence="25">
    <location>
        <begin position="413"/>
        <end position="429"/>
    </location>
</feature>
<feature type="turn" evidence="25">
    <location>
        <begin position="430"/>
        <end position="432"/>
    </location>
</feature>
<feature type="helix" evidence="25">
    <location>
        <begin position="433"/>
        <end position="451"/>
    </location>
</feature>
<feature type="helix" evidence="25">
    <location>
        <begin position="456"/>
        <end position="471"/>
    </location>
</feature>
<feature type="helix" evidence="25">
    <location>
        <begin position="475"/>
        <end position="478"/>
    </location>
</feature>
<feature type="helix" evidence="25">
    <location>
        <begin position="479"/>
        <end position="481"/>
    </location>
</feature>
<feature type="helix" evidence="25">
    <location>
        <begin position="482"/>
        <end position="502"/>
    </location>
</feature>
<feature type="helix" evidence="25">
    <location>
        <begin position="507"/>
        <end position="523"/>
    </location>
</feature>
<feature type="helix" evidence="25">
    <location>
        <begin position="524"/>
        <end position="530"/>
    </location>
</feature>
<feature type="helix" evidence="25">
    <location>
        <begin position="531"/>
        <end position="544"/>
    </location>
</feature>
<feature type="helix" evidence="25">
    <location>
        <begin position="548"/>
        <end position="550"/>
    </location>
</feature>
<feature type="helix" evidence="25">
    <location>
        <begin position="551"/>
        <end position="568"/>
    </location>
</feature>
<feature type="helix" evidence="25">
    <location>
        <begin position="570"/>
        <end position="589"/>
    </location>
</feature>
<feature type="helix" evidence="25">
    <location>
        <begin position="601"/>
        <end position="615"/>
    </location>
</feature>
<feature type="helix" evidence="25">
    <location>
        <begin position="616"/>
        <end position="622"/>
    </location>
</feature>
<feature type="helix" evidence="25">
    <location>
        <begin position="623"/>
        <end position="634"/>
    </location>
</feature>
<feature type="strand" evidence="27">
    <location>
        <begin position="640"/>
        <end position="643"/>
    </location>
</feature>
<feature type="strand" evidence="26">
    <location>
        <begin position="644"/>
        <end position="646"/>
    </location>
</feature>
<feature type="helix" evidence="27">
    <location>
        <begin position="649"/>
        <end position="651"/>
    </location>
</feature>
<feature type="strand" evidence="25">
    <location>
        <begin position="653"/>
        <end position="656"/>
    </location>
</feature>
<feature type="strand" evidence="25">
    <location>
        <begin position="658"/>
        <end position="660"/>
    </location>
</feature>
<feature type="helix" evidence="25">
    <location>
        <begin position="663"/>
        <end position="665"/>
    </location>
</feature>
<feature type="strand" evidence="25">
    <location>
        <begin position="668"/>
        <end position="670"/>
    </location>
</feature>
<feature type="helix" evidence="25">
    <location>
        <begin position="672"/>
        <end position="674"/>
    </location>
</feature>
<feature type="helix" evidence="25">
    <location>
        <begin position="675"/>
        <end position="691"/>
    </location>
</feature>
<feature type="helix" evidence="25">
    <location>
        <begin position="693"/>
        <end position="696"/>
    </location>
</feature>
<feature type="helix" evidence="25">
    <location>
        <begin position="697"/>
        <end position="699"/>
    </location>
</feature>
<feature type="helix" evidence="25">
    <location>
        <begin position="700"/>
        <end position="707"/>
    </location>
</feature>
<feature type="helix" evidence="25">
    <location>
        <begin position="709"/>
        <end position="712"/>
    </location>
</feature>
<feature type="helix" evidence="25">
    <location>
        <begin position="717"/>
        <end position="737"/>
    </location>
</feature>
<feature type="helix" evidence="25">
    <location>
        <begin position="739"/>
        <end position="757"/>
    </location>
</feature>
<feature type="helix" evidence="25">
    <location>
        <begin position="763"/>
        <end position="780"/>
    </location>
</feature>
<feature type="helix" evidence="25">
    <location>
        <begin position="787"/>
        <end position="814"/>
    </location>
</feature>
<feature type="strand" evidence="26">
    <location>
        <begin position="815"/>
        <end position="817"/>
    </location>
</feature>
<feature type="helix" evidence="25">
    <location>
        <begin position="822"/>
        <end position="853"/>
    </location>
</feature>
<feature type="helix" evidence="25">
    <location>
        <begin position="854"/>
        <end position="857"/>
    </location>
</feature>
<feature type="helix" evidence="25">
    <location>
        <begin position="858"/>
        <end position="861"/>
    </location>
</feature>
<feature type="turn" evidence="25">
    <location>
        <begin position="862"/>
        <end position="864"/>
    </location>
</feature>
<feature type="helix" evidence="25">
    <location>
        <begin position="865"/>
        <end position="871"/>
    </location>
</feature>
<feature type="helix" evidence="25">
    <location>
        <begin position="878"/>
        <end position="894"/>
    </location>
</feature>
<feature type="helix" evidence="25">
    <location>
        <begin position="898"/>
        <end position="905"/>
    </location>
</feature>
<feature type="helix" evidence="25">
    <location>
        <begin position="907"/>
        <end position="913"/>
    </location>
</feature>
<feature type="helix" evidence="25">
    <location>
        <begin position="919"/>
        <end position="935"/>
    </location>
</feature>
<feature type="helix" evidence="25">
    <location>
        <begin position="938"/>
        <end position="940"/>
    </location>
</feature>
<feature type="helix" evidence="25">
    <location>
        <begin position="941"/>
        <end position="956"/>
    </location>
</feature>
<feature type="turn" evidence="25">
    <location>
        <begin position="958"/>
        <end position="961"/>
    </location>
</feature>
<feature type="turn" evidence="25">
    <location>
        <begin position="963"/>
        <end position="965"/>
    </location>
</feature>
<feature type="helix" evidence="25">
    <location>
        <begin position="966"/>
        <end position="982"/>
    </location>
</feature>
<feature type="helix" evidence="25">
    <location>
        <begin position="984"/>
        <end position="986"/>
    </location>
</feature>
<feature type="helix" evidence="25">
    <location>
        <begin position="989"/>
        <end position="999"/>
    </location>
</feature>
<feature type="helix" evidence="25">
    <location>
        <begin position="1006"/>
        <end position="1021"/>
    </location>
</feature>
<feature type="strand" evidence="25">
    <location>
        <begin position="1022"/>
        <end position="1024"/>
    </location>
</feature>
<feature type="helix" evidence="25">
    <location>
        <begin position="1026"/>
        <end position="1028"/>
    </location>
</feature>
<feature type="helix" evidence="25">
    <location>
        <begin position="1030"/>
        <end position="1032"/>
    </location>
</feature>
<feature type="helix" evidence="25">
    <location>
        <begin position="1035"/>
        <end position="1043"/>
    </location>
</feature>
<feature type="turn" evidence="25">
    <location>
        <begin position="1044"/>
        <end position="1047"/>
    </location>
</feature>
<feature type="turn" evidence="25">
    <location>
        <begin position="1052"/>
        <end position="1054"/>
    </location>
</feature>
<feature type="helix" evidence="25">
    <location>
        <begin position="1057"/>
        <end position="1068"/>
    </location>
</feature>
<feature type="helix" evidence="25">
    <location>
        <begin position="1072"/>
        <end position="1080"/>
    </location>
</feature>
<feature type="helix" evidence="25">
    <location>
        <begin position="1084"/>
        <end position="1096"/>
    </location>
</feature>
<accession>O00410</accession>
<accession>B4DZA0</accession>
<accession>O15257</accession>
<accession>Q5T578</accession>
<accession>Q86XC7</accession>
<name>IPO5_HUMAN</name>
<proteinExistence type="evidence at protein level"/>
<organism>
    <name type="scientific">Homo sapiens</name>
    <name type="common">Human</name>
    <dbReference type="NCBI Taxonomy" id="9606"/>
    <lineage>
        <taxon>Eukaryota</taxon>
        <taxon>Metazoa</taxon>
        <taxon>Chordata</taxon>
        <taxon>Craniata</taxon>
        <taxon>Vertebrata</taxon>
        <taxon>Euteleostomi</taxon>
        <taxon>Mammalia</taxon>
        <taxon>Eutheria</taxon>
        <taxon>Euarchontoglires</taxon>
        <taxon>Primates</taxon>
        <taxon>Haplorrhini</taxon>
        <taxon>Catarrhini</taxon>
        <taxon>Hominidae</taxon>
        <taxon>Homo</taxon>
    </lineage>
</organism>
<gene>
    <name type="primary">IPO5</name>
    <name type="synonym">KPNB3</name>
    <name type="synonym">RANBP5</name>
</gene>
<comment type="function">
    <text evidence="3 5 8">Functions in nuclear protein import as nuclear transport receptor. Serves as receptor for nuclear localization signals (NLS) in cargo substrates. Is thought to mediate docking of the importin/substrate complex to the nuclear pore complex (NPC) through binding to nucleoporin and the complex is subsequently translocated through the pore by an energy requiring, Ran-dependent mechanism. At the nucleoplasmic side of the NPC, Ran binds to the importin, the importin/substrate complex dissociates and importin is re-exported from the nucleus to the cytoplasm where GTP hydrolysis releases Ran. The directionality of nuclear import is thought to be conferred by an asymmetric distribution of the GTP- and GDP-bound forms of Ran between the cytoplasm and nucleus (By similarity). Mediates the nuclear import of ribosomal proteins RPL23A, RPS7 and RPL5 (PubMed:11682607, PubMed:9687515). In vitro, mediates nuclear import of H2A, H2B, H3 and H4 histones. Binds to CPEB3 and mediates its nuclear import following neuronal stimulation (By similarity). In case of HIV-1 infection, binds and mediates the nuclear import of HIV-1 Rev.</text>
</comment>
<comment type="subunit">
    <text evidence="3 5 7 8">Interacts with RPS7 and RPL5 (PubMed:9687515). Interacts with RPL23A (via BIB domain) (PubMed:11682607, PubMed:9687515). Interacts with H2A, H2B, H3 and H4 histones (By similarity). Interacts with CPEB3; this mediates CPEB3 nuclear import following neuronal stimulation which enhances the interaction in a RAN-regulated manner (PubMed:22730302). Interacts with AIFM2; this interaction likely mediates the translocation of AIFM2 into the nucleus upon oxidative stress. Interacts with STX3 (isoform 3) (PubMed:29475951). Interacts with SRP19 (PubMed:11682607).</text>
</comment>
<comment type="subunit">
    <text evidence="6">(Microbial infection) Interacts with HIV-1 Rev.</text>
</comment>
<comment type="interaction">
    <interactant intactId="EBI-356424">
        <id>O00410</id>
    </interactant>
    <interactant intactId="EBI-717666">
        <id>Q96AP0</id>
        <label>ACD</label>
    </interactant>
    <organismsDiffer>false</organismsDiffer>
    <experiments>2</experiments>
</comment>
<comment type="interaction">
    <interactant intactId="EBI-356424">
        <id>O00410</id>
    </interactant>
    <interactant intactId="EBI-712001">
        <id>O95166</id>
        <label>GABARAP</label>
    </interactant>
    <organismsDiffer>false</organismsDiffer>
    <experiments>6</experiments>
</comment>
<comment type="interaction">
    <interactant intactId="EBI-356424">
        <id>O00410</id>
    </interactant>
    <interactant intactId="EBI-746969">
        <id>Q9H0R8</id>
        <label>GABARAPL1</label>
    </interactant>
    <organismsDiffer>false</organismsDiffer>
    <experiments>4</experiments>
</comment>
<comment type="interaction">
    <interactant intactId="EBI-356424">
        <id>O00410</id>
    </interactant>
    <interactant intactId="EBI-720116">
        <id>P60520</id>
        <label>GABARAPL2</label>
    </interactant>
    <organismsDiffer>false</organismsDiffer>
    <experiments>6</experiments>
</comment>
<comment type="interaction">
    <interactant intactId="EBI-356424">
        <id>O00410</id>
    </interactant>
    <interactant intactId="EBI-373144">
        <id>Q9GZQ8</id>
        <label>MAP1LC3B</label>
    </interactant>
    <organismsDiffer>false</organismsDiffer>
    <experiments>2</experiments>
</comment>
<comment type="interaction">
    <interactant intactId="EBI-356424">
        <id>O00410</id>
    </interactant>
    <interactant intactId="EBI-2603996">
        <id>Q9BXW4</id>
        <label>MAP1LC3C</label>
    </interactant>
    <organismsDiffer>false</organismsDiffer>
    <experiments>2</experiments>
</comment>
<comment type="interaction">
    <interactant intactId="EBI-356424">
        <id>O00410</id>
    </interactant>
    <interactant intactId="EBI-350806">
        <id>P18124</id>
        <label>RPL7</label>
    </interactant>
    <organismsDiffer>false</organismsDiffer>
    <experiments>4</experiments>
</comment>
<comment type="interaction">
    <interactant intactId="EBI-356424">
        <id>O00410</id>
    </interactant>
    <interactant intactId="EBI-8753518">
        <id>PRO_0000037576</id>
        <dbReference type="UniProtKB" id="P27958"/>
    </interactant>
    <organismsDiffer>true</organismsDiffer>
    <experiments>5</experiments>
</comment>
<comment type="interaction">
    <interactant intactId="EBI-9641587">
        <id>O00410-3</id>
    </interactant>
    <interactant intactId="EBI-466029">
        <id>P42858</id>
        <label>HTT</label>
    </interactant>
    <organismsDiffer>false</organismsDiffer>
    <experiments>3</experiments>
</comment>
<comment type="subcellular location">
    <subcellularLocation>
        <location>Cytoplasm</location>
    </subcellularLocation>
    <subcellularLocation>
        <location>Nucleus</location>
    </subcellularLocation>
    <subcellularLocation>
        <location>Nucleus</location>
        <location>Nucleolus</location>
    </subcellularLocation>
    <text>Nucleus; nuclear rim. Found particularly in the nuclear rim and nucleolus.</text>
</comment>
<comment type="alternative products">
    <event type="alternative splicing"/>
    <isoform>
        <id>O00410-1</id>
        <name>1</name>
        <sequence type="displayed"/>
    </isoform>
    <isoform>
        <id>O00410-2</id>
        <name>2</name>
        <sequence type="described" ref="VSP_037587"/>
    </isoform>
    <isoform>
        <id>O00410-3</id>
        <name>3</name>
        <sequence type="described" ref="VSP_037774"/>
    </isoform>
</comment>
<comment type="similarity">
    <text evidence="13">Belongs to the importin beta family. Importin beta-3 subfamily.</text>
</comment>
<comment type="sequence caution" evidence="13">
    <conflict type="frameshift">
        <sequence resource="EMBL-CDS" id="CAA70103"/>
    </conflict>
</comment>
<comment type="sequence caution" evidence="13">
    <molecule>Isoform 3</molecule>
    <conflict type="frameshift">
        <sequence resource="EMBL-CDS" id="CAA70103"/>
    </conflict>
</comment>